<sequence>MALPNQQTVDYPSFKLVIVGDGGTGKTTFVKRHLTGEFEKKYEPTIGVEVHPLDFFTNCGKIRFYCWDTAGQEKFGGLRDGYYIHGQCAIIMFDVTARLTYKNVPTWHRDLCRVCENIPIVLCGNKVDVKNRQVKAKQVTFHRKKNLQYYEISAKSNYNFEKPFLYLARKLAGDANLHFVESPALAPPEVQIDLAAQQLHEQELLQAAAHALPDDDDEAFE</sequence>
<gene>
    <name type="primary">RAN-B1</name>
</gene>
<organism>
    <name type="scientific">Nicotiana tabacum</name>
    <name type="common">Common tobacco</name>
    <dbReference type="NCBI Taxonomy" id="4097"/>
    <lineage>
        <taxon>Eukaryota</taxon>
        <taxon>Viridiplantae</taxon>
        <taxon>Streptophyta</taxon>
        <taxon>Embryophyta</taxon>
        <taxon>Tracheophyta</taxon>
        <taxon>Spermatophyta</taxon>
        <taxon>Magnoliopsida</taxon>
        <taxon>eudicotyledons</taxon>
        <taxon>Gunneridae</taxon>
        <taxon>Pentapetalae</taxon>
        <taxon>asterids</taxon>
        <taxon>lamiids</taxon>
        <taxon>Solanales</taxon>
        <taxon>Solanaceae</taxon>
        <taxon>Nicotianoideae</taxon>
        <taxon>Nicotianeae</taxon>
        <taxon>Nicotiana</taxon>
    </lineage>
</organism>
<accession>P41919</accession>
<name>RANB1_TOBAC</name>
<proteinExistence type="evidence at transcript level"/>
<protein>
    <recommendedName>
        <fullName>GTP-binding nuclear protein Ran-B1</fullName>
    </recommendedName>
</protein>
<dbReference type="EMBL" id="L16787">
    <property type="protein sequence ID" value="AAA34109.1"/>
    <property type="molecule type" value="mRNA"/>
</dbReference>
<dbReference type="RefSeq" id="NP_001312212.1">
    <property type="nucleotide sequence ID" value="NM_001325283.1"/>
</dbReference>
<dbReference type="SMR" id="P41919"/>
<dbReference type="STRING" id="4097.P41919"/>
<dbReference type="PaxDb" id="4097-P41919"/>
<dbReference type="GeneID" id="107779563"/>
<dbReference type="KEGG" id="nta:107779563"/>
<dbReference type="OrthoDB" id="2012850at2759"/>
<dbReference type="Proteomes" id="UP000084051">
    <property type="component" value="Unplaced"/>
</dbReference>
<dbReference type="GO" id="GO:0005737">
    <property type="term" value="C:cytoplasm"/>
    <property type="evidence" value="ECO:0000318"/>
    <property type="project" value="GO_Central"/>
</dbReference>
<dbReference type="GO" id="GO:0005634">
    <property type="term" value="C:nucleus"/>
    <property type="evidence" value="ECO:0000318"/>
    <property type="project" value="GO_Central"/>
</dbReference>
<dbReference type="GO" id="GO:0005525">
    <property type="term" value="F:GTP binding"/>
    <property type="evidence" value="ECO:0007669"/>
    <property type="project" value="UniProtKB-KW"/>
</dbReference>
<dbReference type="GO" id="GO:0003924">
    <property type="term" value="F:GTPase activity"/>
    <property type="evidence" value="ECO:0000318"/>
    <property type="project" value="GO_Central"/>
</dbReference>
<dbReference type="GO" id="GO:0006606">
    <property type="term" value="P:protein import into nucleus"/>
    <property type="evidence" value="ECO:0000318"/>
    <property type="project" value="GO_Central"/>
</dbReference>
<dbReference type="GO" id="GO:0000054">
    <property type="term" value="P:ribosomal subunit export from nucleus"/>
    <property type="evidence" value="ECO:0000318"/>
    <property type="project" value="GO_Central"/>
</dbReference>
<dbReference type="CDD" id="cd00877">
    <property type="entry name" value="Ran"/>
    <property type="match status" value="1"/>
</dbReference>
<dbReference type="FunFam" id="3.40.50.300:FF:000369">
    <property type="entry name" value="GTP-binding nuclear protein"/>
    <property type="match status" value="1"/>
</dbReference>
<dbReference type="Gene3D" id="3.40.50.300">
    <property type="entry name" value="P-loop containing nucleotide triphosphate hydrolases"/>
    <property type="match status" value="1"/>
</dbReference>
<dbReference type="InterPro" id="IPR027417">
    <property type="entry name" value="P-loop_NTPase"/>
</dbReference>
<dbReference type="InterPro" id="IPR002041">
    <property type="entry name" value="Ran_GTPase"/>
</dbReference>
<dbReference type="InterPro" id="IPR005225">
    <property type="entry name" value="Small_GTP-bd"/>
</dbReference>
<dbReference type="InterPro" id="IPR001806">
    <property type="entry name" value="Small_GTPase"/>
</dbReference>
<dbReference type="NCBIfam" id="TIGR00231">
    <property type="entry name" value="small_GTP"/>
    <property type="match status" value="1"/>
</dbReference>
<dbReference type="PANTHER" id="PTHR24071:SF33">
    <property type="entry name" value="GTP-BINDING NUCLEAR PROTEIN RAN-1"/>
    <property type="match status" value="1"/>
</dbReference>
<dbReference type="PANTHER" id="PTHR24071">
    <property type="entry name" value="RAN GTPASE"/>
    <property type="match status" value="1"/>
</dbReference>
<dbReference type="Pfam" id="PF00071">
    <property type="entry name" value="Ras"/>
    <property type="match status" value="1"/>
</dbReference>
<dbReference type="PRINTS" id="PR00627">
    <property type="entry name" value="GTPRANTC4"/>
</dbReference>
<dbReference type="SMART" id="SM00175">
    <property type="entry name" value="RAB"/>
    <property type="match status" value="1"/>
</dbReference>
<dbReference type="SMART" id="SM00176">
    <property type="entry name" value="RAN"/>
    <property type="match status" value="1"/>
</dbReference>
<dbReference type="SMART" id="SM00173">
    <property type="entry name" value="RAS"/>
    <property type="match status" value="1"/>
</dbReference>
<dbReference type="SMART" id="SM00174">
    <property type="entry name" value="RHO"/>
    <property type="match status" value="1"/>
</dbReference>
<dbReference type="SUPFAM" id="SSF52540">
    <property type="entry name" value="P-loop containing nucleoside triphosphate hydrolases"/>
    <property type="match status" value="1"/>
</dbReference>
<dbReference type="PROSITE" id="PS51418">
    <property type="entry name" value="RAN"/>
    <property type="match status" value="1"/>
</dbReference>
<evidence type="ECO:0000250" key="1"/>
<evidence type="ECO:0000250" key="2">
    <source>
        <dbReference type="UniProtKB" id="P62825"/>
    </source>
</evidence>
<evidence type="ECO:0000255" key="3">
    <source>
        <dbReference type="PROSITE-ProRule" id="PRU00752"/>
    </source>
</evidence>
<evidence type="ECO:0000305" key="4"/>
<reference key="1">
    <citation type="journal article" date="1994" name="Plant J.">
        <title>Phenotype of the fission yeast cell cycle regulatory mutant pim1-46 is suppressed by a tobacco cDNA encoding a small, Ran-like GTP-binding protein.</title>
        <authorList>
            <person name="Merkle T."/>
            <person name="Haizel T."/>
            <person name="Matsumoto T."/>
            <person name="Harter K."/>
            <person name="Dallmann G."/>
            <person name="Nagy F."/>
        </authorList>
    </citation>
    <scope>NUCLEOTIDE SEQUENCE [MRNA]</scope>
    <source>
        <strain>cv. SR1</strain>
    </source>
</reference>
<comment type="function">
    <text evidence="1">GTP-binding protein involved in nucleocytoplasmic transport. Required for the import of protein into the nucleus and also for RNA export. Involved in chromatin condensation and control of cell cycle (By similarity).</text>
</comment>
<comment type="subunit">
    <text evidence="2">Found in a nuclear export complex with RanGTP, exportin and pre-miRNA (By similarity).</text>
</comment>
<comment type="subcellular location">
    <subcellularLocation>
        <location evidence="1">Nucleus</location>
    </subcellularLocation>
</comment>
<comment type="similarity">
    <text evidence="3 4">Belongs to the small GTPase superfamily. Ran family.</text>
</comment>
<feature type="chain" id="PRO_0000208726" description="GTP-binding nuclear protein Ran-B1">
    <location>
        <begin position="1"/>
        <end position="221"/>
    </location>
</feature>
<feature type="domain" description="Small GTPase Ran-type" evidence="3">
    <location>
        <begin position="10"/>
        <end position="174"/>
    </location>
</feature>
<feature type="region of interest" description="Switch-I" evidence="3">
    <location>
        <begin position="40"/>
        <end position="48"/>
    </location>
</feature>
<feature type="region of interest" description="Switch-II" evidence="3">
    <location>
        <begin position="71"/>
        <end position="87"/>
    </location>
</feature>
<feature type="binding site" evidence="2">
    <location>
        <begin position="21"/>
        <end position="28"/>
    </location>
    <ligand>
        <name>GTP</name>
        <dbReference type="ChEBI" id="CHEBI:37565"/>
    </ligand>
</feature>
<feature type="binding site" evidence="2">
    <location>
        <position position="71"/>
    </location>
    <ligand>
        <name>GTP</name>
        <dbReference type="ChEBI" id="CHEBI:37565"/>
    </ligand>
</feature>
<feature type="binding site" evidence="2">
    <location>
        <begin position="125"/>
        <end position="128"/>
    </location>
    <ligand>
        <name>GTP</name>
        <dbReference type="ChEBI" id="CHEBI:37565"/>
    </ligand>
</feature>
<feature type="binding site" evidence="2">
    <location>
        <begin position="153"/>
        <end position="155"/>
    </location>
    <ligand>
        <name>GTP</name>
        <dbReference type="ChEBI" id="CHEBI:37565"/>
    </ligand>
</feature>
<keyword id="KW-0342">GTP-binding</keyword>
<keyword id="KW-0547">Nucleotide-binding</keyword>
<keyword id="KW-0539">Nucleus</keyword>
<keyword id="KW-0653">Protein transport</keyword>
<keyword id="KW-1185">Reference proteome</keyword>
<keyword id="KW-0813">Transport</keyword>